<name>NDLMS_EUBBA</name>
<organism>
    <name type="scientific">Eubacterium barkeri</name>
    <name type="common">Clostridium barkeri</name>
    <dbReference type="NCBI Taxonomy" id="1528"/>
    <lineage>
        <taxon>Bacteria</taxon>
        <taxon>Bacillati</taxon>
        <taxon>Bacillota</taxon>
        <taxon>Clostridia</taxon>
        <taxon>Eubacteriales</taxon>
        <taxon>Eubacteriaceae</taxon>
        <taxon>Eubacterium</taxon>
    </lineage>
</organism>
<accession>Q0QLF2</accession>
<dbReference type="EC" id="1.17.1.5"/>
<dbReference type="EMBL" id="DQ310789">
    <property type="protein sequence ID" value="ABC88398.1"/>
    <property type="molecule type" value="Genomic_DNA"/>
</dbReference>
<dbReference type="RefSeq" id="WP_278286246.1">
    <property type="nucleotide sequence ID" value="NZ_FNOU01000012.1"/>
</dbReference>
<dbReference type="PDB" id="3HRD">
    <property type="method" value="X-ray"/>
    <property type="resolution" value="2.20 A"/>
    <property type="chains" value="A/E=1-425"/>
</dbReference>
<dbReference type="PDBsum" id="3HRD"/>
<dbReference type="SMR" id="Q0QLF2"/>
<dbReference type="DIP" id="DIP-48913N"/>
<dbReference type="IntAct" id="Q0QLF2">
    <property type="interactions" value="1"/>
</dbReference>
<dbReference type="STRING" id="1528.SAMN04488579_11214"/>
<dbReference type="KEGG" id="ag:ABC88398"/>
<dbReference type="BioCyc" id="MetaCyc:MONOMER-11705"/>
<dbReference type="BRENDA" id="1.17.1.5">
    <property type="organism ID" value="1459"/>
</dbReference>
<dbReference type="UniPathway" id="UPA01010">
    <property type="reaction ID" value="UER01011"/>
</dbReference>
<dbReference type="EvolutionaryTrace" id="Q0QLF2"/>
<dbReference type="GO" id="GO:0005506">
    <property type="term" value="F:iron ion binding"/>
    <property type="evidence" value="ECO:0007669"/>
    <property type="project" value="InterPro"/>
</dbReference>
<dbReference type="GO" id="GO:0050138">
    <property type="term" value="F:nicotinate dehydrogenase activity"/>
    <property type="evidence" value="ECO:0000314"/>
    <property type="project" value="UniProtKB"/>
</dbReference>
<dbReference type="GO" id="GO:1901848">
    <property type="term" value="P:nicotinate catabolic process"/>
    <property type="evidence" value="ECO:0000314"/>
    <property type="project" value="UniProtKB"/>
</dbReference>
<dbReference type="Gene3D" id="3.90.1170.50">
    <property type="entry name" value="Aldehyde oxidase/xanthine dehydrogenase, a/b hammerhead"/>
    <property type="match status" value="1"/>
</dbReference>
<dbReference type="Gene3D" id="3.30.365.10">
    <property type="entry name" value="Aldehyde oxidase/xanthine dehydrogenase, molybdopterin binding domain"/>
    <property type="match status" value="3"/>
</dbReference>
<dbReference type="InterPro" id="IPR000674">
    <property type="entry name" value="Ald_Oxase/Xan_DH_a/b"/>
</dbReference>
<dbReference type="InterPro" id="IPR036856">
    <property type="entry name" value="Ald_Oxase/Xan_DH_a/b_sf"/>
</dbReference>
<dbReference type="InterPro" id="IPR016208">
    <property type="entry name" value="Ald_Oxase/xanthine_DH-like"/>
</dbReference>
<dbReference type="InterPro" id="IPR008274">
    <property type="entry name" value="AldOxase/xan_DH_MoCoBD1"/>
</dbReference>
<dbReference type="InterPro" id="IPR037165">
    <property type="entry name" value="AldOxase/xan_DH_Mopterin-bd_sf"/>
</dbReference>
<dbReference type="PANTHER" id="PTHR11908">
    <property type="entry name" value="XANTHINE DEHYDROGENASE"/>
    <property type="match status" value="1"/>
</dbReference>
<dbReference type="PANTHER" id="PTHR11908:SF157">
    <property type="entry name" value="XANTHINE DEHYDROGENASE SUBUNIT D-RELATED"/>
    <property type="match status" value="1"/>
</dbReference>
<dbReference type="Pfam" id="PF01315">
    <property type="entry name" value="Ald_Xan_dh_C"/>
    <property type="match status" value="1"/>
</dbReference>
<dbReference type="Pfam" id="PF02738">
    <property type="entry name" value="MoCoBD_1"/>
    <property type="match status" value="1"/>
</dbReference>
<dbReference type="SMART" id="SM01008">
    <property type="entry name" value="Ald_Xan_dh_C"/>
    <property type="match status" value="1"/>
</dbReference>
<dbReference type="SUPFAM" id="SSF54665">
    <property type="entry name" value="CO dehydrogenase molybdoprotein N-domain-like"/>
    <property type="match status" value="1"/>
</dbReference>
<dbReference type="SUPFAM" id="SSF56003">
    <property type="entry name" value="Molybdenum cofactor-binding domain"/>
    <property type="match status" value="1"/>
</dbReference>
<feature type="initiator methionine" description="Removed" evidence="4">
    <location>
        <position position="1"/>
    </location>
</feature>
<feature type="chain" id="PRO_0000404243" description="Nicotinate dehydrogenase large molybdopterin subunit" evidence="4">
    <location>
        <begin position="2"/>
        <end position="425"/>
    </location>
</feature>
<feature type="binding site" evidence="3">
    <location>
        <position position="208"/>
    </location>
    <ligand>
        <name>Se-Mo-molybdopterin cytosine dinucleotide</name>
        <dbReference type="ChEBI" id="CHEBI:73094"/>
    </ligand>
</feature>
<feature type="binding site" evidence="3">
    <location>
        <begin position="238"/>
        <end position="240"/>
    </location>
    <ligand>
        <name>Se-Mo-molybdopterin cytosine dinucleotide</name>
        <dbReference type="ChEBI" id="CHEBI:73094"/>
    </ligand>
</feature>
<feature type="helix" evidence="9">
    <location>
        <begin position="17"/>
        <end position="21"/>
    </location>
</feature>
<feature type="helix" evidence="9">
    <location>
        <begin position="28"/>
        <end position="30"/>
    </location>
</feature>
<feature type="strand" evidence="9">
    <location>
        <begin position="37"/>
        <end position="43"/>
    </location>
</feature>
<feature type="strand" evidence="9">
    <location>
        <begin position="45"/>
        <end position="55"/>
    </location>
</feature>
<feature type="helix" evidence="9">
    <location>
        <begin position="57"/>
        <end position="60"/>
    </location>
</feature>
<feature type="strand" evidence="9">
    <location>
        <begin position="65"/>
        <end position="69"/>
    </location>
</feature>
<feature type="helix" evidence="9">
    <location>
        <begin position="71"/>
        <end position="73"/>
    </location>
</feature>
<feature type="strand" evidence="9">
    <location>
        <begin position="82"/>
        <end position="84"/>
    </location>
</feature>
<feature type="strand" evidence="9">
    <location>
        <begin position="101"/>
        <end position="109"/>
    </location>
</feature>
<feature type="helix" evidence="9">
    <location>
        <begin position="110"/>
        <end position="119"/>
    </location>
</feature>
<feature type="strand" evidence="9">
    <location>
        <begin position="121"/>
        <end position="126"/>
    </location>
</feature>
<feature type="helix" evidence="9">
    <location>
        <begin position="133"/>
        <end position="137"/>
    </location>
</feature>
<feature type="strand" evidence="9">
    <location>
        <begin position="149"/>
        <end position="159"/>
    </location>
</feature>
<feature type="helix" evidence="9">
    <location>
        <begin position="161"/>
        <end position="166"/>
    </location>
</feature>
<feature type="strand" evidence="9">
    <location>
        <begin position="169"/>
        <end position="178"/>
    </location>
</feature>
<feature type="strand" evidence="9">
    <location>
        <begin position="190"/>
        <end position="195"/>
    </location>
</feature>
<feature type="strand" evidence="9">
    <location>
        <begin position="201"/>
        <end position="205"/>
    </location>
</feature>
<feature type="helix" evidence="9">
    <location>
        <begin position="210"/>
        <end position="220"/>
    </location>
</feature>
<feature type="helix" evidence="9">
    <location>
        <begin position="225"/>
        <end position="227"/>
    </location>
</feature>
<feature type="strand" evidence="9">
    <location>
        <begin position="228"/>
        <end position="232"/>
    </location>
</feature>
<feature type="turn" evidence="9">
    <location>
        <begin position="239"/>
        <end position="242"/>
    </location>
</feature>
<feature type="helix" evidence="9">
    <location>
        <begin position="248"/>
        <end position="258"/>
    </location>
</feature>
<feature type="strand" evidence="9">
    <location>
        <begin position="262"/>
        <end position="265"/>
    </location>
</feature>
<feature type="helix" evidence="9">
    <location>
        <begin position="268"/>
        <end position="274"/>
    </location>
</feature>
<feature type="strand" evidence="9">
    <location>
        <begin position="281"/>
        <end position="289"/>
    </location>
</feature>
<feature type="strand" evidence="9">
    <location>
        <begin position="295"/>
        <end position="309"/>
    </location>
</feature>
<feature type="helix" evidence="9">
    <location>
        <begin position="313"/>
        <end position="323"/>
    </location>
</feature>
<feature type="strand" evidence="9">
    <location>
        <begin position="333"/>
        <end position="341"/>
    </location>
</feature>
<feature type="strand" evidence="9">
    <location>
        <begin position="343"/>
        <end position="345"/>
    </location>
</feature>
<feature type="turn" evidence="9">
    <location>
        <begin position="351"/>
        <end position="354"/>
    </location>
</feature>
<feature type="helix" evidence="9">
    <location>
        <begin position="355"/>
        <end position="372"/>
    </location>
</feature>
<feature type="helix" evidence="9">
    <location>
        <begin position="377"/>
        <end position="384"/>
    </location>
</feature>
<feature type="helix" evidence="9">
    <location>
        <begin position="404"/>
        <end position="419"/>
    </location>
</feature>
<keyword id="KW-0002">3D-structure</keyword>
<keyword id="KW-0903">Direct protein sequencing</keyword>
<keyword id="KW-0479">Metal-binding</keyword>
<keyword id="KW-0500">Molybdenum</keyword>
<keyword id="KW-0521">NADP</keyword>
<keyword id="KW-0560">Oxidoreductase</keyword>
<keyword id="KW-0711">Selenium</keyword>
<evidence type="ECO:0000255" key="1"/>
<evidence type="ECO:0000269" key="2">
    <source>
    </source>
</evidence>
<evidence type="ECO:0000269" key="3">
    <source>
    </source>
</evidence>
<evidence type="ECO:0000269" key="4">
    <source>
    </source>
</evidence>
<evidence type="ECO:0000303" key="5">
    <source>
    </source>
</evidence>
<evidence type="ECO:0000303" key="6">
    <source>
    </source>
</evidence>
<evidence type="ECO:0000305" key="7"/>
<evidence type="ECO:0000312" key="8">
    <source>
        <dbReference type="EMBL" id="ABC88398.1"/>
    </source>
</evidence>
<evidence type="ECO:0007829" key="9">
    <source>
        <dbReference type="PDB" id="3HRD"/>
    </source>
</evidence>
<proteinExistence type="evidence at protein level"/>
<comment type="function">
    <text evidence="4">Catalyzes the hydroxylation of nicotinate to 6-hydroxynicotinate. Also active against 2-pyrazinecarboxylic acid, but inactive against other nicotinate analogs.</text>
</comment>
<comment type="catalytic activity">
    <reaction evidence="4">
        <text>nicotinate + NADP(+) + H2O = 6-hydroxynicotinate + NADPH + H(+)</text>
        <dbReference type="Rhea" id="RHEA:12236"/>
        <dbReference type="ChEBI" id="CHEBI:15377"/>
        <dbReference type="ChEBI" id="CHEBI:15378"/>
        <dbReference type="ChEBI" id="CHEBI:32544"/>
        <dbReference type="ChEBI" id="CHEBI:57664"/>
        <dbReference type="ChEBI" id="CHEBI:57783"/>
        <dbReference type="ChEBI" id="CHEBI:58349"/>
        <dbReference type="EC" id="1.17.1.5"/>
    </reaction>
</comment>
<comment type="cofactor">
    <cofactor evidence="4">
        <name>Se-Mo-molybdopterin cytosine dinucleotide</name>
        <dbReference type="ChEBI" id="CHEBI:73094"/>
    </cofactor>
    <text evidence="4">Binds 1 Se-Mo-molybdopterin cytosine dinucleotide (Se-Mo-MCD) cofactor per heterotetramer. The cofactor is bound between the NdhL and NdhM subunits.</text>
</comment>
<comment type="activity regulation">
    <text evidence="4">Reversibly inactivated by selenide and sulfide. Not inhibited by cyanide.</text>
</comment>
<comment type="biophysicochemical properties">
    <phDependence>
        <text evidence="4">Most stable at pH 8.0. Unstable at acidic pH values.</text>
    </phDependence>
</comment>
<comment type="pathway">
    <text evidence="2">Cofactor degradation; nicotinate degradation; 6-hydroxynicotinate from nicotinate: step 1/1.</text>
</comment>
<comment type="subunit">
    <text evidence="3 4">Heterooctamer of NDHM, NDHL, NDHS and NDHF. Dimer of heterotetramers.</text>
</comment>
<comment type="similarity">
    <text evidence="1">Belongs to the xanthine dehydrogenase family.</text>
</comment>
<gene>
    <name type="primary">ndhL</name>
</gene>
<protein>
    <recommendedName>
        <fullName evidence="8">Nicotinate dehydrogenase large molybdopterin subunit</fullName>
        <shortName evidence="5">NDH</shortName>
        <ecNumber>1.17.1.5</ecNumber>
    </recommendedName>
    <alternativeName>
        <fullName evidence="6">Nicotinic acid hydroxylase large molybdopterin subunit</fullName>
        <shortName evidence="6">NAH</shortName>
    </alternativeName>
</protein>
<sequence>MGKDYQVLGKNKVKVDSLEKVMGTAKFAADYSFPDMLYAGVFRSTVPHARIVSLDLSKARAIDGVEAVLDYHAIPGKNRFGIIIKDEPCLVDDKVRRYGDAIAVVAAQTPDLVQEALDAITIEYEELEGIFTMERALEEDSPAIHGDTNIHQVKHLEYGDVDAAFKQCDIVVEDTYSTHRLTHMFIEPDAGVSYYDNEGMLTVVVSTQNPHYDRGEVAGMLALPNSKVRIIQATTGGGFGGKLDLSVQCHCALLTYHTKKPVKMVRSREESTTVSSKRHPMTMHCKTGATKDGRLQAVQVEMFGDTGAYASYGPAVITRATVHCMGPYVVPNVRVDAKFVYTNNPMSGAFRGFGVPQASVCHEGQMNALAKALGMDPIDIRILNAHQVGAKLATGQVLENSVGLIETLEKAREKAVEVMGYEKTR</sequence>
<reference evidence="7 8" key="1">
    <citation type="journal article" date="2006" name="Proc. Natl. Acad. Sci. U.S.A.">
        <title>Molecular and functional analysis of nicotinate catabolism in Eubacterium barkeri.</title>
        <authorList>
            <person name="Alhapel A."/>
            <person name="Darley D.J."/>
            <person name="Wagener N."/>
            <person name="Eckel E."/>
            <person name="Elsner N."/>
            <person name="Pierik A.J."/>
        </authorList>
    </citation>
    <scope>NUCLEOTIDE SEQUENCE [GENOMIC DNA]</scope>
    <scope>PATHWAY</scope>
    <source>
        <strain evidence="8">ATCC 25849 / DSM 1223 / JCM 1389 / NCIMB 10623 / VKM B-1775 / VPI 5359</strain>
    </source>
</reference>
<reference evidence="7" key="2">
    <citation type="journal article" date="1996" name="Biochemistry">
        <title>Properties of the selenium- and molybdenum-containing nicotinic acid hydroxylase from Clostridium barkeri.</title>
        <authorList>
            <person name="Gladyshev V.N."/>
            <person name="Khangulov S.V."/>
            <person name="Stadtman T.C."/>
        </authorList>
    </citation>
    <scope>PROTEIN SEQUENCE OF 2-26</scope>
    <scope>FUNCTION</scope>
    <scope>CATALYTIC ACTIVITY</scope>
    <scope>COFACTOR</scope>
    <scope>BIOPHYSICOCHEMICAL PROPERTIES</scope>
    <scope>ACTIVITY REGULATION</scope>
    <scope>SUBUNIT</scope>
    <source>
        <strain evidence="4">ATCC 25849 / DSM 1223 / JCM 1389 / NCIMB 10623 / VKM B-1775 / VPI 5359</strain>
    </source>
</reference>
<reference evidence="7" key="3">
    <citation type="journal article" date="2009" name="Proc. Natl. Acad. Sci. U.S.A.">
        <title>The Mo-Se active site of nicotinate dehydrogenase.</title>
        <authorList>
            <person name="Wagener N."/>
            <person name="Pierik A.J."/>
            <person name="Ibdah A."/>
            <person name="Hille R."/>
            <person name="Dobbek H."/>
        </authorList>
    </citation>
    <scope>X-RAY CRYSTALLOGRAPHY (2.2 ANGSTROMS) IN COMPLEX WITH COFACTOR; NDHM; NDHS AND NDHF</scope>
    <scope>SUBUNIT</scope>
    <source>
        <strain evidence="3">ATCC 25849 / DSM 1223 / JCM 1389 / NCIMB 10623 / VKM B-1775 / VPI 5359</strain>
    </source>
</reference>